<feature type="initiator methionine" description="Removed" evidence="1">
    <location>
        <position position="1"/>
    </location>
</feature>
<feature type="chain" id="PRO_0000138579" description="Peptide methionine sulfoxide reductase MsrA">
    <location>
        <begin position="2"/>
        <end position="212"/>
    </location>
</feature>
<feature type="active site">
    <location>
        <position position="52"/>
    </location>
</feature>
<organism>
    <name type="scientific">Shigella flexneri</name>
    <dbReference type="NCBI Taxonomy" id="623"/>
    <lineage>
        <taxon>Bacteria</taxon>
        <taxon>Pseudomonadati</taxon>
        <taxon>Pseudomonadota</taxon>
        <taxon>Gammaproteobacteria</taxon>
        <taxon>Enterobacterales</taxon>
        <taxon>Enterobacteriaceae</taxon>
        <taxon>Shigella</taxon>
    </lineage>
</organism>
<gene>
    <name type="primary">msrA</name>
    <name type="synonym">pms</name>
    <name type="ordered locus">SF4268</name>
    <name type="ordered locus">S4532</name>
</gene>
<name>MSRA_SHIFL</name>
<dbReference type="EC" id="1.8.4.11"/>
<dbReference type="EMBL" id="AE005674">
    <property type="protein sequence ID" value="AAN45686.2"/>
    <property type="molecule type" value="Genomic_DNA"/>
</dbReference>
<dbReference type="EMBL" id="AE014073">
    <property type="protein sequence ID" value="AAP19472.1"/>
    <property type="molecule type" value="Genomic_DNA"/>
</dbReference>
<dbReference type="RefSeq" id="NP_709979.2">
    <property type="nucleotide sequence ID" value="NC_004337.2"/>
</dbReference>
<dbReference type="RefSeq" id="WP_001295196.1">
    <property type="nucleotide sequence ID" value="NZ_WPGW01000086.1"/>
</dbReference>
<dbReference type="SMR" id="P0A745"/>
<dbReference type="STRING" id="198214.SF4268"/>
<dbReference type="DrugBank" id="DB03963">
    <property type="generic name" value="S-(Dimethylarsenic)Cysteine"/>
</dbReference>
<dbReference type="PaxDb" id="198214-SF4268"/>
<dbReference type="GeneID" id="1026808"/>
<dbReference type="GeneID" id="93777602"/>
<dbReference type="KEGG" id="sfl:SF4268"/>
<dbReference type="KEGG" id="sfx:S4532"/>
<dbReference type="PATRIC" id="fig|198214.7.peg.5036"/>
<dbReference type="HOGENOM" id="CLU_031040_10_3_6"/>
<dbReference type="Proteomes" id="UP000001006">
    <property type="component" value="Chromosome"/>
</dbReference>
<dbReference type="Proteomes" id="UP000002673">
    <property type="component" value="Chromosome"/>
</dbReference>
<dbReference type="GO" id="GO:0005737">
    <property type="term" value="C:cytoplasm"/>
    <property type="evidence" value="ECO:0007669"/>
    <property type="project" value="TreeGrafter"/>
</dbReference>
<dbReference type="GO" id="GO:0036456">
    <property type="term" value="F:L-methionine-(S)-S-oxide reductase activity"/>
    <property type="evidence" value="ECO:0007669"/>
    <property type="project" value="TreeGrafter"/>
</dbReference>
<dbReference type="GO" id="GO:0008113">
    <property type="term" value="F:peptide-methionine (S)-S-oxide reductase activity"/>
    <property type="evidence" value="ECO:0007669"/>
    <property type="project" value="UniProtKB-UniRule"/>
</dbReference>
<dbReference type="GO" id="GO:0034599">
    <property type="term" value="P:cellular response to oxidative stress"/>
    <property type="evidence" value="ECO:0007669"/>
    <property type="project" value="TreeGrafter"/>
</dbReference>
<dbReference type="GO" id="GO:0036211">
    <property type="term" value="P:protein modification process"/>
    <property type="evidence" value="ECO:0007669"/>
    <property type="project" value="UniProtKB-UniRule"/>
</dbReference>
<dbReference type="FunFam" id="3.30.1060.10:FF:000001">
    <property type="entry name" value="Peptide methionine sulfoxide reductase MsrA"/>
    <property type="match status" value="1"/>
</dbReference>
<dbReference type="Gene3D" id="3.30.1060.10">
    <property type="entry name" value="Peptide methionine sulphoxide reductase MsrA"/>
    <property type="match status" value="1"/>
</dbReference>
<dbReference type="HAMAP" id="MF_01401">
    <property type="entry name" value="MsrA"/>
    <property type="match status" value="1"/>
</dbReference>
<dbReference type="InterPro" id="IPR002569">
    <property type="entry name" value="Met_Sox_Rdtase_MsrA_dom"/>
</dbReference>
<dbReference type="InterPro" id="IPR036509">
    <property type="entry name" value="Met_Sox_Rdtase_MsrA_sf"/>
</dbReference>
<dbReference type="InterPro" id="IPR050162">
    <property type="entry name" value="MsrA_MetSO_reductase"/>
</dbReference>
<dbReference type="NCBIfam" id="TIGR00401">
    <property type="entry name" value="msrA"/>
    <property type="match status" value="1"/>
</dbReference>
<dbReference type="PANTHER" id="PTHR42799">
    <property type="entry name" value="MITOCHONDRIAL PEPTIDE METHIONINE SULFOXIDE REDUCTASE"/>
    <property type="match status" value="1"/>
</dbReference>
<dbReference type="PANTHER" id="PTHR42799:SF2">
    <property type="entry name" value="MITOCHONDRIAL PEPTIDE METHIONINE SULFOXIDE REDUCTASE"/>
    <property type="match status" value="1"/>
</dbReference>
<dbReference type="Pfam" id="PF01625">
    <property type="entry name" value="PMSR"/>
    <property type="match status" value="1"/>
</dbReference>
<dbReference type="SUPFAM" id="SSF55068">
    <property type="entry name" value="Peptide methionine sulfoxide reductase"/>
    <property type="match status" value="1"/>
</dbReference>
<accession>P0A745</accession>
<accession>P27110</accession>
<comment type="function">
    <text evidence="1">Has an important function as a repair enzyme for proteins that have been inactivated by oxidation. Catalyzes the reversible oxidation-reduction of methionine sulfoxide in proteins to methionine (By similarity).</text>
</comment>
<comment type="catalytic activity">
    <reaction>
        <text>L-methionyl-[protein] + [thioredoxin]-disulfide + H2O = L-methionyl-(S)-S-oxide-[protein] + [thioredoxin]-dithiol</text>
        <dbReference type="Rhea" id="RHEA:14217"/>
        <dbReference type="Rhea" id="RHEA-COMP:10698"/>
        <dbReference type="Rhea" id="RHEA-COMP:10700"/>
        <dbReference type="Rhea" id="RHEA-COMP:12313"/>
        <dbReference type="Rhea" id="RHEA-COMP:12315"/>
        <dbReference type="ChEBI" id="CHEBI:15377"/>
        <dbReference type="ChEBI" id="CHEBI:16044"/>
        <dbReference type="ChEBI" id="CHEBI:29950"/>
        <dbReference type="ChEBI" id="CHEBI:44120"/>
        <dbReference type="ChEBI" id="CHEBI:50058"/>
        <dbReference type="EC" id="1.8.4.11"/>
    </reaction>
</comment>
<comment type="catalytic activity">
    <reaction>
        <text>[thioredoxin]-disulfide + L-methionine + H2O = L-methionine (S)-S-oxide + [thioredoxin]-dithiol</text>
        <dbReference type="Rhea" id="RHEA:19993"/>
        <dbReference type="Rhea" id="RHEA-COMP:10698"/>
        <dbReference type="Rhea" id="RHEA-COMP:10700"/>
        <dbReference type="ChEBI" id="CHEBI:15377"/>
        <dbReference type="ChEBI" id="CHEBI:29950"/>
        <dbReference type="ChEBI" id="CHEBI:50058"/>
        <dbReference type="ChEBI" id="CHEBI:57844"/>
        <dbReference type="ChEBI" id="CHEBI:58772"/>
        <dbReference type="EC" id="1.8.4.11"/>
    </reaction>
</comment>
<comment type="similarity">
    <text evidence="2">Belongs to the MsrA Met sulfoxide reductase family.</text>
</comment>
<keyword id="KW-0560">Oxidoreductase</keyword>
<keyword id="KW-1185">Reference proteome</keyword>
<sequence>MSLFDKKHLVSPADALPGRNTPMPVATLHAVNGHSMTNVPDGMEIAIFAMGCFWGVERLFWQLPGVYSTAAGYTGGYTPNPTYREVCSGDTGHAEAVRIVYDPSVISYEQLLQVFWENHDPAQGMRQGNDHGTQYRSAIYPLTPEQDAAARASLERFQAAMLAADDDRHITTEIANATPFYYAEDDHQQYLHKNPYGYCGIGGIGVCLPPEA</sequence>
<reference key="1">
    <citation type="journal article" date="2002" name="Nucleic Acids Res.">
        <title>Genome sequence of Shigella flexneri 2a: insights into pathogenicity through comparison with genomes of Escherichia coli K12 and O157.</title>
        <authorList>
            <person name="Jin Q."/>
            <person name="Yuan Z."/>
            <person name="Xu J."/>
            <person name="Wang Y."/>
            <person name="Shen Y."/>
            <person name="Lu W."/>
            <person name="Wang J."/>
            <person name="Liu H."/>
            <person name="Yang J."/>
            <person name="Yang F."/>
            <person name="Zhang X."/>
            <person name="Zhang J."/>
            <person name="Yang G."/>
            <person name="Wu H."/>
            <person name="Qu D."/>
            <person name="Dong J."/>
            <person name="Sun L."/>
            <person name="Xue Y."/>
            <person name="Zhao A."/>
            <person name="Gao Y."/>
            <person name="Zhu J."/>
            <person name="Kan B."/>
            <person name="Ding K."/>
            <person name="Chen S."/>
            <person name="Cheng H."/>
            <person name="Yao Z."/>
            <person name="He B."/>
            <person name="Chen R."/>
            <person name="Ma D."/>
            <person name="Qiang B."/>
            <person name="Wen Y."/>
            <person name="Hou Y."/>
            <person name="Yu J."/>
        </authorList>
    </citation>
    <scope>NUCLEOTIDE SEQUENCE [LARGE SCALE GENOMIC DNA]</scope>
    <source>
        <strain>301 / Serotype 2a</strain>
    </source>
</reference>
<reference key="2">
    <citation type="journal article" date="2003" name="Infect. Immun.">
        <title>Complete genome sequence and comparative genomics of Shigella flexneri serotype 2a strain 2457T.</title>
        <authorList>
            <person name="Wei J."/>
            <person name="Goldberg M.B."/>
            <person name="Burland V."/>
            <person name="Venkatesan M.M."/>
            <person name="Deng W."/>
            <person name="Fournier G."/>
            <person name="Mayhew G.F."/>
            <person name="Plunkett G. III"/>
            <person name="Rose D.J."/>
            <person name="Darling A."/>
            <person name="Mau B."/>
            <person name="Perna N.T."/>
            <person name="Payne S.M."/>
            <person name="Runyen-Janecky L.J."/>
            <person name="Zhou S."/>
            <person name="Schwartz D.C."/>
            <person name="Blattner F.R."/>
        </authorList>
    </citation>
    <scope>NUCLEOTIDE SEQUENCE [LARGE SCALE GENOMIC DNA]</scope>
    <source>
        <strain>ATCC 700930 / 2457T / Serotype 2a</strain>
    </source>
</reference>
<protein>
    <recommendedName>
        <fullName>Peptide methionine sulfoxide reductase MsrA</fullName>
        <shortName>Protein-methionine-S-oxide reductase</shortName>
        <ecNumber>1.8.4.11</ecNumber>
    </recommendedName>
    <alternativeName>
        <fullName>Peptide-methionine (S)-S-oxide reductase</fullName>
        <shortName>Peptide Met(O) reductase</shortName>
    </alternativeName>
</protein>
<evidence type="ECO:0000250" key="1"/>
<evidence type="ECO:0000305" key="2"/>
<proteinExistence type="inferred from homology"/>